<dbReference type="EC" id="3.1.-.-" evidence="1"/>
<dbReference type="EMBL" id="AP008229">
    <property type="protein sequence ID" value="BAE69364.1"/>
    <property type="molecule type" value="Genomic_DNA"/>
</dbReference>
<dbReference type="RefSeq" id="WP_011259363.1">
    <property type="nucleotide sequence ID" value="NC_007705.1"/>
</dbReference>
<dbReference type="SMR" id="Q2P263"/>
<dbReference type="KEGG" id="xom:XOO2609"/>
<dbReference type="HOGENOM" id="CLU_106710_0_1_6"/>
<dbReference type="GO" id="GO:0005737">
    <property type="term" value="C:cytoplasm"/>
    <property type="evidence" value="ECO:0007669"/>
    <property type="project" value="UniProtKB-SubCell"/>
</dbReference>
<dbReference type="GO" id="GO:0004222">
    <property type="term" value="F:metalloendopeptidase activity"/>
    <property type="evidence" value="ECO:0007669"/>
    <property type="project" value="InterPro"/>
</dbReference>
<dbReference type="GO" id="GO:0004521">
    <property type="term" value="F:RNA endonuclease activity"/>
    <property type="evidence" value="ECO:0007669"/>
    <property type="project" value="UniProtKB-UniRule"/>
</dbReference>
<dbReference type="GO" id="GO:0008270">
    <property type="term" value="F:zinc ion binding"/>
    <property type="evidence" value="ECO:0007669"/>
    <property type="project" value="UniProtKB-UniRule"/>
</dbReference>
<dbReference type="GO" id="GO:0006364">
    <property type="term" value="P:rRNA processing"/>
    <property type="evidence" value="ECO:0007669"/>
    <property type="project" value="UniProtKB-UniRule"/>
</dbReference>
<dbReference type="Gene3D" id="3.40.390.30">
    <property type="entry name" value="Metalloproteases ('zincins'), catalytic domain"/>
    <property type="match status" value="1"/>
</dbReference>
<dbReference type="HAMAP" id="MF_00009">
    <property type="entry name" value="Endoribonucl_YbeY"/>
    <property type="match status" value="1"/>
</dbReference>
<dbReference type="InterPro" id="IPR023091">
    <property type="entry name" value="MetalPrtase_cat_dom_sf_prd"/>
</dbReference>
<dbReference type="InterPro" id="IPR002036">
    <property type="entry name" value="YbeY"/>
</dbReference>
<dbReference type="InterPro" id="IPR020549">
    <property type="entry name" value="YbeY_CS"/>
</dbReference>
<dbReference type="NCBIfam" id="TIGR00043">
    <property type="entry name" value="rRNA maturation RNase YbeY"/>
    <property type="match status" value="1"/>
</dbReference>
<dbReference type="PANTHER" id="PTHR46986">
    <property type="entry name" value="ENDORIBONUCLEASE YBEY, CHLOROPLASTIC"/>
    <property type="match status" value="1"/>
</dbReference>
<dbReference type="PANTHER" id="PTHR46986:SF1">
    <property type="entry name" value="ENDORIBONUCLEASE YBEY, CHLOROPLASTIC"/>
    <property type="match status" value="1"/>
</dbReference>
<dbReference type="Pfam" id="PF02130">
    <property type="entry name" value="YbeY"/>
    <property type="match status" value="1"/>
</dbReference>
<dbReference type="SUPFAM" id="SSF55486">
    <property type="entry name" value="Metalloproteases ('zincins'), catalytic domain"/>
    <property type="match status" value="1"/>
</dbReference>
<dbReference type="PROSITE" id="PS01306">
    <property type="entry name" value="UPF0054"/>
    <property type="match status" value="1"/>
</dbReference>
<gene>
    <name evidence="1" type="primary">ybeY</name>
    <name type="ordered locus">XOO2609</name>
</gene>
<name>YBEY_XANOM</name>
<comment type="function">
    <text evidence="1">Single strand-specific metallo-endoribonuclease involved in late-stage 70S ribosome quality control and in maturation of the 3' terminus of the 16S rRNA.</text>
</comment>
<comment type="cofactor">
    <cofactor evidence="1">
        <name>Zn(2+)</name>
        <dbReference type="ChEBI" id="CHEBI:29105"/>
    </cofactor>
    <text evidence="1">Binds 1 zinc ion.</text>
</comment>
<comment type="subcellular location">
    <subcellularLocation>
        <location evidence="1">Cytoplasm</location>
    </subcellularLocation>
</comment>
<comment type="similarity">
    <text evidence="1">Belongs to the endoribonuclease YbeY family.</text>
</comment>
<accession>Q2P263</accession>
<keyword id="KW-0963">Cytoplasm</keyword>
<keyword id="KW-0255">Endonuclease</keyword>
<keyword id="KW-0378">Hydrolase</keyword>
<keyword id="KW-0479">Metal-binding</keyword>
<keyword id="KW-0540">Nuclease</keyword>
<keyword id="KW-0690">Ribosome biogenesis</keyword>
<keyword id="KW-0698">rRNA processing</keyword>
<keyword id="KW-0862">Zinc</keyword>
<organism>
    <name type="scientific">Xanthomonas oryzae pv. oryzae (strain MAFF 311018)</name>
    <dbReference type="NCBI Taxonomy" id="342109"/>
    <lineage>
        <taxon>Bacteria</taxon>
        <taxon>Pseudomonadati</taxon>
        <taxon>Pseudomonadota</taxon>
        <taxon>Gammaproteobacteria</taxon>
        <taxon>Lysobacterales</taxon>
        <taxon>Lysobacteraceae</taxon>
        <taxon>Xanthomonas</taxon>
    </lineage>
</organism>
<reference key="1">
    <citation type="journal article" date="2005" name="Jpn. Agric. Res. Q.">
        <title>Genome sequence of Xanthomonas oryzae pv. oryzae suggests contribution of large numbers of effector genes and insertion sequences to its race diversity.</title>
        <authorList>
            <person name="Ochiai H."/>
            <person name="Inoue Y."/>
            <person name="Takeya M."/>
            <person name="Sasaki A."/>
            <person name="Kaku H."/>
        </authorList>
    </citation>
    <scope>NUCLEOTIDE SEQUENCE [LARGE SCALE GENOMIC DNA]</scope>
    <source>
        <strain>MAFF 311018</strain>
    </source>
</reference>
<evidence type="ECO:0000255" key="1">
    <source>
        <dbReference type="HAMAP-Rule" id="MF_00009"/>
    </source>
</evidence>
<protein>
    <recommendedName>
        <fullName evidence="1">Endoribonuclease YbeY</fullName>
        <ecNumber evidence="1">3.1.-.-</ecNumber>
    </recommendedName>
</protein>
<feature type="chain" id="PRO_0000284350" description="Endoribonuclease YbeY">
    <location>
        <begin position="1"/>
        <end position="161"/>
    </location>
</feature>
<feature type="binding site" evidence="1">
    <location>
        <position position="121"/>
    </location>
    <ligand>
        <name>Zn(2+)</name>
        <dbReference type="ChEBI" id="CHEBI:29105"/>
        <note>catalytic</note>
    </ligand>
</feature>
<feature type="binding site" evidence="1">
    <location>
        <position position="125"/>
    </location>
    <ligand>
        <name>Zn(2+)</name>
        <dbReference type="ChEBI" id="CHEBI:29105"/>
        <note>catalytic</note>
    </ligand>
</feature>
<feature type="binding site" evidence="1">
    <location>
        <position position="131"/>
    </location>
    <ligand>
        <name>Zn(2+)</name>
        <dbReference type="ChEBI" id="CHEBI:29105"/>
        <note>catalytic</note>
    </ligand>
</feature>
<proteinExistence type="inferred from homology"/>
<sequence>MTKGPIRLDVAVSYALPRAGLPSAVSFRKWVAAALKGRIREADLAVRLVDEKEGCSLNHHYRGKDYATNVLSFPAELPEGLPKGIKMPLLGDLVICAPVVAREAAEQGKSLAAHYAHLTVHGTLHLLGWDHDDDKEADAMEQLEREILADLGIDDPYAGEQ</sequence>